<accession>G0S4F3</accession>
<accession>G0ZGT7</accession>
<reference key="1">
    <citation type="journal article" date="2011" name="Cell">
        <title>Insight into structure and assembly of the nuclear pore complex by utilizing the genome of a eukaryotic thermophile.</title>
        <authorList>
            <person name="Amlacher S."/>
            <person name="Sarges P."/>
            <person name="Flemming D."/>
            <person name="van Noort V."/>
            <person name="Kunze R."/>
            <person name="Devos D.P."/>
            <person name="Arumugam M."/>
            <person name="Bork P."/>
            <person name="Hurt E."/>
        </authorList>
    </citation>
    <scope>NUCLEOTIDE SEQUENCE [LARGE SCALE GENOMIC DNA]</scope>
    <source>
        <strain>DSM 1495 / CBS 144.50 / IMI 039719</strain>
    </source>
</reference>
<evidence type="ECO:0000250" key="1">
    <source>
        <dbReference type="UniProtKB" id="P40368"/>
    </source>
</evidence>
<evidence type="ECO:0000255" key="2"/>
<evidence type="ECO:0000256" key="3">
    <source>
        <dbReference type="SAM" id="MobiDB-lite"/>
    </source>
</evidence>
<evidence type="ECO:0000303" key="4">
    <source>
    </source>
</evidence>
<evidence type="ECO:0000305" key="5">
    <source>
    </source>
</evidence>
<evidence type="ECO:0007829" key="6">
    <source>
        <dbReference type="PDB" id="5CWW"/>
    </source>
</evidence>
<protein>
    <recommendedName>
        <fullName evidence="4">Nucleoporin NUP82</fullName>
    </recommendedName>
    <alternativeName>
        <fullName>Nuclear pore protein NUP82</fullName>
    </alternativeName>
</protein>
<proteinExistence type="evidence at protein level"/>
<feature type="chain" id="PRO_0000433172" description="Nucleoporin NUP82">
    <location>
        <begin position="1"/>
        <end position="882"/>
    </location>
</feature>
<feature type="region of interest" description="Disordered" evidence="3">
    <location>
        <begin position="76"/>
        <end position="98"/>
    </location>
</feature>
<feature type="coiled-coil region" evidence="2">
    <location>
        <begin position="676"/>
        <end position="762"/>
    </location>
</feature>
<feature type="coiled-coil region" evidence="2">
    <location>
        <begin position="806"/>
        <end position="829"/>
    </location>
</feature>
<feature type="helix" evidence="6">
    <location>
        <begin position="10"/>
        <end position="12"/>
    </location>
</feature>
<feature type="helix" evidence="6">
    <location>
        <begin position="17"/>
        <end position="21"/>
    </location>
</feature>
<feature type="strand" evidence="6">
    <location>
        <begin position="49"/>
        <end position="52"/>
    </location>
</feature>
<feature type="strand" evidence="6">
    <location>
        <begin position="55"/>
        <end position="60"/>
    </location>
</feature>
<feature type="strand" evidence="6">
    <location>
        <begin position="63"/>
        <end position="68"/>
    </location>
</feature>
<feature type="helix" evidence="6">
    <location>
        <begin position="69"/>
        <end position="77"/>
    </location>
</feature>
<feature type="strand" evidence="6">
    <location>
        <begin position="106"/>
        <end position="110"/>
    </location>
</feature>
<feature type="strand" evidence="6">
    <location>
        <begin position="119"/>
        <end position="122"/>
    </location>
</feature>
<feature type="strand" evidence="6">
    <location>
        <begin position="126"/>
        <end position="132"/>
    </location>
</feature>
<feature type="strand" evidence="6">
    <location>
        <begin position="137"/>
        <end position="141"/>
    </location>
</feature>
<feature type="helix" evidence="6">
    <location>
        <begin position="145"/>
        <end position="148"/>
    </location>
</feature>
<feature type="strand" evidence="6">
    <location>
        <begin position="160"/>
        <end position="163"/>
    </location>
</feature>
<feature type="turn" evidence="6">
    <location>
        <begin position="165"/>
        <end position="167"/>
    </location>
</feature>
<feature type="strand" evidence="6">
    <location>
        <begin position="175"/>
        <end position="180"/>
    </location>
</feature>
<feature type="helix" evidence="6">
    <location>
        <begin position="185"/>
        <end position="187"/>
    </location>
</feature>
<feature type="strand" evidence="6">
    <location>
        <begin position="189"/>
        <end position="194"/>
    </location>
</feature>
<feature type="strand" evidence="6">
    <location>
        <begin position="198"/>
        <end position="203"/>
    </location>
</feature>
<feature type="helix" evidence="6">
    <location>
        <begin position="210"/>
        <end position="213"/>
    </location>
</feature>
<feature type="strand" evidence="6">
    <location>
        <begin position="216"/>
        <end position="220"/>
    </location>
</feature>
<feature type="helix" evidence="6">
    <location>
        <begin position="221"/>
        <end position="225"/>
    </location>
</feature>
<feature type="helix" evidence="6">
    <location>
        <begin position="248"/>
        <end position="251"/>
    </location>
</feature>
<feature type="strand" evidence="6">
    <location>
        <begin position="254"/>
        <end position="258"/>
    </location>
</feature>
<feature type="helix" evidence="6">
    <location>
        <begin position="268"/>
        <end position="270"/>
    </location>
</feature>
<feature type="strand" evidence="6">
    <location>
        <begin position="272"/>
        <end position="276"/>
    </location>
</feature>
<feature type="strand" evidence="6">
    <location>
        <begin position="281"/>
        <end position="284"/>
    </location>
</feature>
<feature type="strand" evidence="6">
    <location>
        <begin position="290"/>
        <end position="292"/>
    </location>
</feature>
<feature type="helix" evidence="6">
    <location>
        <begin position="298"/>
        <end position="315"/>
    </location>
</feature>
<feature type="helix" evidence="6">
    <location>
        <begin position="321"/>
        <end position="338"/>
    </location>
</feature>
<feature type="strand" evidence="6">
    <location>
        <begin position="343"/>
        <end position="345"/>
    </location>
</feature>
<feature type="strand" evidence="6">
    <location>
        <begin position="354"/>
        <end position="358"/>
    </location>
</feature>
<feature type="strand" evidence="6">
    <location>
        <begin position="374"/>
        <end position="376"/>
    </location>
</feature>
<feature type="helix" evidence="6">
    <location>
        <begin position="384"/>
        <end position="387"/>
    </location>
</feature>
<feature type="strand" evidence="6">
    <location>
        <begin position="388"/>
        <end position="395"/>
    </location>
</feature>
<feature type="strand" evidence="6">
    <location>
        <begin position="427"/>
        <end position="432"/>
    </location>
</feature>
<feature type="strand" evidence="6">
    <location>
        <begin position="437"/>
        <end position="441"/>
    </location>
</feature>
<feature type="strand" evidence="6">
    <location>
        <begin position="469"/>
        <end position="476"/>
    </location>
</feature>
<feature type="helix" evidence="6">
    <location>
        <begin position="481"/>
        <end position="483"/>
    </location>
</feature>
<feature type="strand" evidence="6">
    <location>
        <begin position="491"/>
        <end position="494"/>
    </location>
</feature>
<feature type="strand" evidence="6">
    <location>
        <begin position="501"/>
        <end position="506"/>
    </location>
</feature>
<feature type="strand" evidence="6">
    <location>
        <begin position="509"/>
        <end position="514"/>
    </location>
</feature>
<feature type="helix" evidence="6">
    <location>
        <begin position="518"/>
        <end position="526"/>
    </location>
</feature>
<feature type="helix" evidence="6">
    <location>
        <begin position="534"/>
        <end position="543"/>
    </location>
</feature>
<feature type="strand" evidence="6">
    <location>
        <begin position="547"/>
        <end position="554"/>
    </location>
</feature>
<feature type="strand" evidence="6">
    <location>
        <begin position="566"/>
        <end position="570"/>
    </location>
</feature>
<feature type="turn" evidence="6">
    <location>
        <begin position="571"/>
        <end position="573"/>
    </location>
</feature>
<feature type="strand" evidence="6">
    <location>
        <begin position="574"/>
        <end position="580"/>
    </location>
</feature>
<feature type="strand" evidence="6">
    <location>
        <begin position="585"/>
        <end position="591"/>
    </location>
</feature>
<dbReference type="EMBL" id="GL988041">
    <property type="protein sequence ID" value="EGS20431.1"/>
    <property type="molecule type" value="Genomic_DNA"/>
</dbReference>
<dbReference type="EMBL" id="JF276277">
    <property type="protein sequence ID" value="AEL00675.1"/>
    <property type="molecule type" value="Genomic_DNA"/>
</dbReference>
<dbReference type="RefSeq" id="XP_006692727.1">
    <property type="nucleotide sequence ID" value="XM_006692664.1"/>
</dbReference>
<dbReference type="PDB" id="5CWW">
    <property type="method" value="X-ray"/>
    <property type="resolution" value="2.20 A"/>
    <property type="chains" value="B=1-595"/>
</dbReference>
<dbReference type="PDBsum" id="5CWW"/>
<dbReference type="SMR" id="G0S4F3"/>
<dbReference type="DIP" id="DIP-61837N"/>
<dbReference type="IntAct" id="G0S4F3">
    <property type="interactions" value="4"/>
</dbReference>
<dbReference type="STRING" id="759272.G0S4F3"/>
<dbReference type="TCDB" id="1.I.1.1.2">
    <property type="family name" value="the nuclear pore complex (npc) family"/>
</dbReference>
<dbReference type="GeneID" id="18256299"/>
<dbReference type="KEGG" id="cthr:CTHT_0022610"/>
<dbReference type="eggNOG" id="ENOG502RXM6">
    <property type="taxonomic scope" value="Eukaryota"/>
</dbReference>
<dbReference type="HOGENOM" id="CLU_009483_0_0_1"/>
<dbReference type="OMA" id="WHPLGVH"/>
<dbReference type="OrthoDB" id="341482at2759"/>
<dbReference type="EvolutionaryTrace" id="G0S4F3"/>
<dbReference type="Proteomes" id="UP000008066">
    <property type="component" value="Unassembled WGS sequence"/>
</dbReference>
<dbReference type="GO" id="GO:0031965">
    <property type="term" value="C:nuclear membrane"/>
    <property type="evidence" value="ECO:0007669"/>
    <property type="project" value="UniProtKB-SubCell"/>
</dbReference>
<dbReference type="GO" id="GO:0005643">
    <property type="term" value="C:nuclear pore"/>
    <property type="evidence" value="ECO:0007669"/>
    <property type="project" value="UniProtKB-SubCell"/>
</dbReference>
<dbReference type="GO" id="GO:0017056">
    <property type="term" value="F:structural constituent of nuclear pore"/>
    <property type="evidence" value="ECO:0007669"/>
    <property type="project" value="InterPro"/>
</dbReference>
<dbReference type="GO" id="GO:0006406">
    <property type="term" value="P:mRNA export from nucleus"/>
    <property type="evidence" value="ECO:0007669"/>
    <property type="project" value="TreeGrafter"/>
</dbReference>
<dbReference type="GO" id="GO:0006606">
    <property type="term" value="P:protein import into nucleus"/>
    <property type="evidence" value="ECO:0007669"/>
    <property type="project" value="TreeGrafter"/>
</dbReference>
<dbReference type="GO" id="GO:0000055">
    <property type="term" value="P:ribosomal large subunit export from nucleus"/>
    <property type="evidence" value="ECO:0007669"/>
    <property type="project" value="InterPro"/>
</dbReference>
<dbReference type="GO" id="GO:0000056">
    <property type="term" value="P:ribosomal small subunit export from nucleus"/>
    <property type="evidence" value="ECO:0007669"/>
    <property type="project" value="InterPro"/>
</dbReference>
<dbReference type="InterPro" id="IPR037700">
    <property type="entry name" value="NUP88/NUP82"/>
</dbReference>
<dbReference type="InterPro" id="IPR036322">
    <property type="entry name" value="WD40_repeat_dom_sf"/>
</dbReference>
<dbReference type="PANTHER" id="PTHR13257:SF0">
    <property type="entry name" value="NUCLEAR PORE COMPLEX PROTEIN NUP88"/>
    <property type="match status" value="1"/>
</dbReference>
<dbReference type="PANTHER" id="PTHR13257">
    <property type="entry name" value="NUCLEOPORIN NUP84-RELATED"/>
    <property type="match status" value="1"/>
</dbReference>
<dbReference type="SUPFAM" id="SSF50978">
    <property type="entry name" value="WD40 repeat-like"/>
    <property type="match status" value="1"/>
</dbReference>
<dbReference type="PROSITE" id="PS00678">
    <property type="entry name" value="WD_REPEATS_1"/>
    <property type="match status" value="1"/>
</dbReference>
<name>NUP82_CHATD</name>
<comment type="function">
    <text evidence="1">Functions as a component of the nuclear pore complex (NPC). NPC components, collectively referred to as nucleoporins (NUPs), can play the role of both NPC structural components and of docking or interaction partners for transiently associated nuclear transport factors.</text>
</comment>
<comment type="subunit">
    <text evidence="1 5">Component of the nuclear pore complex (NPC). NPC constitutes the exclusive means of nucleocytoplasmic transport. NPCs allow the passive diffusion of ions and small molecules and the active, nuclear transport receptor-mediated bidirectional transport of macromolecules such as proteins, RNAs, ribonucleoparticles (RNPs), and ribosomal subunits across the nuclear envelope. Due to its 8-fold rotational symmetry, all subunits are present with 8 copies or multiples thereof.</text>
</comment>
<comment type="interaction">
    <interactant intactId="EBI-16176422">
        <id>G0S4F3</id>
    </interactant>
    <interactant intactId="EBI-16069276">
        <id>G0SAK3</id>
        <label>NUP145</label>
    </interactant>
    <organismsDiffer>false</organismsDiffer>
    <experiments>2</experiments>
</comment>
<comment type="subcellular location">
    <subcellularLocation>
        <location evidence="1">Nucleus</location>
        <location evidence="1">Nuclear pore complex</location>
    </subcellularLocation>
    <subcellularLocation>
        <location evidence="1">Nucleus membrane</location>
        <topology evidence="1">Peripheral membrane protein</topology>
        <orientation evidence="1">Cytoplasmic side</orientation>
    </subcellularLocation>
</comment>
<sequence>MPKIKSFAPAWLNEPAPGHKLFAPAADDGTATVPLAYGKKIKPGPRRTIARRGTEIFVACGKQIRWGDLAQLKESWESRPSRSSVGPTSTKKDSSDFDDGAATAGYRIIKTPVADDIRQLVMSPNQDFLAVLTSHTVHICILPDSSHLHIQDTTPFKPKFWTLGPTTHVTSRSAVVSAVWHPLGVNGHALVTVTEDAIVRVWELSTADRWTFDAPTLAIDLKKLADATYLDQDFGVSTSATNKGFSPDAFDMEVAAACFPTRDSGGWAPMTLWLAMTSGDVYALCPLLPQRWTPPPTLIPSLSASIVAKVAAAEDNPESTPEERLVAQQQLEWMSEIDNQEPKLVEEATGEATIEVYTRPSRPGLVPKLQGPFDFDLNPEDEQDDEVELKDIYVIGEKPRVADLMRGEEEELEMMKEDQHNGLSLNIICLLSTSGQVKICLDIDGVEAQWLPPRSKNKRLFAPPPEPPSLLTFQTFDTLKPAEVTPDGWPMFSEDATSPYSFYVTHPAGITYISLTPWVFRLESELQSDSEAGTEFRIDLLAKGQGSERDRIFTQTRTQSPLAAATSIDDPDLGYFILSATQTDPIALFFETPERPVVPKETSVVIPEHVEERPPSPYWEPRPLFHPAEALDKPSAVPAWIDNLRTGRRRPLLTQELRLSMATLEVFHDGHKVVSTEVSDINDAVAELFRKCEALQGELRDQIKKVNEVKNRIHTITGDDLSDDPPVSEDQLIKQRIRVARERQEELANRMERLRKKFGRTTTRELSDKEKAWIEEVQNMATSILGPEAGQGALATTPNLAKQPWKRLEEIKTLRNALMAEAEQLQKVGDDTEESTPASQMPSLKIPSEIRKAKMAQVMSLLERESALVDAVKARIERLSIG</sequence>
<keyword id="KW-0002">3D-structure</keyword>
<keyword id="KW-0175">Coiled coil</keyword>
<keyword id="KW-0472">Membrane</keyword>
<keyword id="KW-0509">mRNA transport</keyword>
<keyword id="KW-0906">Nuclear pore complex</keyword>
<keyword id="KW-0539">Nucleus</keyword>
<keyword id="KW-0653">Protein transport</keyword>
<keyword id="KW-1185">Reference proteome</keyword>
<keyword id="KW-0811">Translocation</keyword>
<keyword id="KW-0813">Transport</keyword>
<gene>
    <name type="primary">NUP82</name>
    <name type="ORF">CTHT_0022610</name>
</gene>
<organism>
    <name type="scientific">Chaetomium thermophilum (strain DSM 1495 / CBS 144.50 / IMI 039719)</name>
    <name type="common">Thermochaetoides thermophila</name>
    <dbReference type="NCBI Taxonomy" id="759272"/>
    <lineage>
        <taxon>Eukaryota</taxon>
        <taxon>Fungi</taxon>
        <taxon>Dikarya</taxon>
        <taxon>Ascomycota</taxon>
        <taxon>Pezizomycotina</taxon>
        <taxon>Sordariomycetes</taxon>
        <taxon>Sordariomycetidae</taxon>
        <taxon>Sordariales</taxon>
        <taxon>Chaetomiaceae</taxon>
        <taxon>Thermochaetoides</taxon>
    </lineage>
</organism>